<evidence type="ECO:0000250" key="1"/>
<evidence type="ECO:0000269" key="2">
    <source>
    </source>
</evidence>
<evidence type="ECO:0000305" key="3"/>
<organism>
    <name type="scientific">Arabidopsis thaliana</name>
    <name type="common">Mouse-ear cress</name>
    <dbReference type="NCBI Taxonomy" id="3702"/>
    <lineage>
        <taxon>Eukaryota</taxon>
        <taxon>Viridiplantae</taxon>
        <taxon>Streptophyta</taxon>
        <taxon>Embryophyta</taxon>
        <taxon>Tracheophyta</taxon>
        <taxon>Spermatophyta</taxon>
        <taxon>Magnoliopsida</taxon>
        <taxon>eudicotyledons</taxon>
        <taxon>Gunneridae</taxon>
        <taxon>Pentapetalae</taxon>
        <taxon>rosids</taxon>
        <taxon>malvids</taxon>
        <taxon>Brassicales</taxon>
        <taxon>Brassicaceae</taxon>
        <taxon>Camelineae</taxon>
        <taxon>Arabidopsis</taxon>
    </lineage>
</organism>
<name>ASK8_ARATH</name>
<gene>
    <name type="primary">ASK8</name>
    <name type="ordered locus">At3g21830</name>
    <name type="ORF">MSD21.20</name>
</gene>
<accession>Q9LSY1</accession>
<feature type="chain" id="PRO_0000375249" description="SKP1-like protein 8">
    <location>
        <begin position="1"/>
        <end position="152"/>
    </location>
</feature>
<feature type="region of interest" description="Interaction with the F-box domain of F-box proteins" evidence="1">
    <location>
        <begin position="94"/>
        <end position="152"/>
    </location>
</feature>
<sequence>MSTKKIMLKSSEGKTFEIEEETARQCQTIAHMIEAECTDNVILVLKMTSEILEMVIEYCNKHHVDAANPCSDDDLEKWDKEFMEKDKSTIFALTNAANFLNNKSLLHLAGQTVADMIKGNTPKQMREFFNIENDLTPEEEAAIRRENKWAFE</sequence>
<proteinExistence type="evidence at transcript level"/>
<protein>
    <recommendedName>
        <fullName>SKP1-like protein 8</fullName>
        <shortName>AtSK8</shortName>
    </recommendedName>
</protein>
<dbReference type="EMBL" id="AB025634">
    <property type="protein sequence ID" value="BAB02845.1"/>
    <property type="molecule type" value="Genomic_DNA"/>
</dbReference>
<dbReference type="EMBL" id="CP002686">
    <property type="protein sequence ID" value="AEE76556.1"/>
    <property type="molecule type" value="Genomic_DNA"/>
</dbReference>
<dbReference type="EMBL" id="DQ056601">
    <property type="protein sequence ID" value="AAY78749.1"/>
    <property type="molecule type" value="mRNA"/>
</dbReference>
<dbReference type="RefSeq" id="NP_566692.1">
    <property type="nucleotide sequence ID" value="NM_113078.1"/>
</dbReference>
<dbReference type="SMR" id="Q9LSY1"/>
<dbReference type="BioGRID" id="7069">
    <property type="interactions" value="12"/>
</dbReference>
<dbReference type="ComplexPortal" id="CPX-1435">
    <property type="entry name" value="SCF(COI1) ubiquitin ligase complex, variant CUL1-RBX1A-ASK8"/>
</dbReference>
<dbReference type="ComplexPortal" id="CPX-1456">
    <property type="entry name" value="SCF(COI1) ubiquitin ligase complex, variant CUL1-RBX1B-ASK8"/>
</dbReference>
<dbReference type="ComplexPortal" id="CPX-1478">
    <property type="entry name" value="SCF(COI1) ubiquitin ligase complex, variant CUL2-RBX1A-ASK8"/>
</dbReference>
<dbReference type="ComplexPortal" id="CPX-1499">
    <property type="entry name" value="SCF(COI1) ubiquitin ligase complex, variant CUL2-RBX1B-ASK8"/>
</dbReference>
<dbReference type="ComplexPortal" id="CPX-1521">
    <property type="entry name" value="SCF(TIR1) ubiquitin ligase complex, variant CUL1-RBX1A-ASK8"/>
</dbReference>
<dbReference type="ComplexPortal" id="CPX-1542">
    <property type="entry name" value="SCF(TIR1) ubiquitin ligase complex, variant CUL1-RBX1B-ASK8"/>
</dbReference>
<dbReference type="ComplexPortal" id="CPX-1564">
    <property type="entry name" value="SCF(TIR1) ubiquitin ligase complex, variant CUL2-RBX1A-ASK8"/>
</dbReference>
<dbReference type="ComplexPortal" id="CPX-1585">
    <property type="entry name" value="SCF(TIR1) ubiquitin ligase complex, variant CUL2-RBX1B-ASK8"/>
</dbReference>
<dbReference type="FunCoup" id="Q9LSY1">
    <property type="interactions" value="162"/>
</dbReference>
<dbReference type="IntAct" id="Q9LSY1">
    <property type="interactions" value="2"/>
</dbReference>
<dbReference type="STRING" id="3702.Q9LSY1"/>
<dbReference type="PaxDb" id="3702-AT3G21830.1"/>
<dbReference type="ProteomicsDB" id="246856"/>
<dbReference type="EnsemblPlants" id="AT3G21830.1">
    <property type="protein sequence ID" value="AT3G21830.1"/>
    <property type="gene ID" value="AT3G21830"/>
</dbReference>
<dbReference type="GeneID" id="821737"/>
<dbReference type="Gramene" id="AT3G21830.1">
    <property type="protein sequence ID" value="AT3G21830.1"/>
    <property type="gene ID" value="AT3G21830"/>
</dbReference>
<dbReference type="KEGG" id="ath:AT3G21830"/>
<dbReference type="Araport" id="AT3G21830"/>
<dbReference type="TAIR" id="AT3G21830">
    <property type="gene designation" value="SK8"/>
</dbReference>
<dbReference type="eggNOG" id="KOG1724">
    <property type="taxonomic scope" value="Eukaryota"/>
</dbReference>
<dbReference type="HOGENOM" id="CLU_059252_6_1_1"/>
<dbReference type="InParanoid" id="Q9LSY1"/>
<dbReference type="PhylomeDB" id="Q9LSY1"/>
<dbReference type="UniPathway" id="UPA00143"/>
<dbReference type="PRO" id="PR:Q9LSY1"/>
<dbReference type="Proteomes" id="UP000006548">
    <property type="component" value="Chromosome 3"/>
</dbReference>
<dbReference type="ExpressionAtlas" id="Q9LSY1">
    <property type="expression patterns" value="baseline and differential"/>
</dbReference>
<dbReference type="GO" id="GO:0005634">
    <property type="term" value="C:nucleus"/>
    <property type="evidence" value="ECO:0007669"/>
    <property type="project" value="UniProtKB-SubCell"/>
</dbReference>
<dbReference type="GO" id="GO:0019005">
    <property type="term" value="C:SCF ubiquitin ligase complex"/>
    <property type="evidence" value="ECO:0000250"/>
    <property type="project" value="TAIR"/>
</dbReference>
<dbReference type="GO" id="GO:0009734">
    <property type="term" value="P:auxin-activated signaling pathway"/>
    <property type="evidence" value="ECO:0000303"/>
    <property type="project" value="ComplexPortal"/>
</dbReference>
<dbReference type="GO" id="GO:0009867">
    <property type="term" value="P:jasmonic acid mediated signaling pathway"/>
    <property type="evidence" value="ECO:0000315"/>
    <property type="project" value="ComplexPortal"/>
</dbReference>
<dbReference type="GO" id="GO:0016567">
    <property type="term" value="P:protein ubiquitination"/>
    <property type="evidence" value="ECO:0007669"/>
    <property type="project" value="UniProtKB-UniPathway"/>
</dbReference>
<dbReference type="GO" id="GO:0009733">
    <property type="term" value="P:response to auxin"/>
    <property type="evidence" value="ECO:0000303"/>
    <property type="project" value="ComplexPortal"/>
</dbReference>
<dbReference type="GO" id="GO:0009753">
    <property type="term" value="P:response to jasmonic acid"/>
    <property type="evidence" value="ECO:0000315"/>
    <property type="project" value="ComplexPortal"/>
</dbReference>
<dbReference type="GO" id="GO:0006511">
    <property type="term" value="P:ubiquitin-dependent protein catabolic process"/>
    <property type="evidence" value="ECO:0000304"/>
    <property type="project" value="TAIR"/>
</dbReference>
<dbReference type="CDD" id="cd18322">
    <property type="entry name" value="BTB_POZ_SKP1"/>
    <property type="match status" value="1"/>
</dbReference>
<dbReference type="FunFam" id="3.30.710.10:FF:000230">
    <property type="entry name" value="SKP1-like protein 7"/>
    <property type="match status" value="1"/>
</dbReference>
<dbReference type="Gene3D" id="3.30.710.10">
    <property type="entry name" value="Potassium Channel Kv1.1, Chain A"/>
    <property type="match status" value="1"/>
</dbReference>
<dbReference type="InterPro" id="IPR016897">
    <property type="entry name" value="SKP1"/>
</dbReference>
<dbReference type="InterPro" id="IPR001232">
    <property type="entry name" value="SKP1-like"/>
</dbReference>
<dbReference type="InterPro" id="IPR036296">
    <property type="entry name" value="SKP1-like_dim_sf"/>
</dbReference>
<dbReference type="InterPro" id="IPR011333">
    <property type="entry name" value="SKP1/BTB/POZ_sf"/>
</dbReference>
<dbReference type="InterPro" id="IPR016072">
    <property type="entry name" value="Skp1_comp_dimer"/>
</dbReference>
<dbReference type="InterPro" id="IPR016073">
    <property type="entry name" value="Skp1_comp_POZ"/>
</dbReference>
<dbReference type="PANTHER" id="PTHR11165">
    <property type="entry name" value="SKP1"/>
    <property type="match status" value="1"/>
</dbReference>
<dbReference type="Pfam" id="PF01466">
    <property type="entry name" value="Skp1"/>
    <property type="match status" value="1"/>
</dbReference>
<dbReference type="Pfam" id="PF03931">
    <property type="entry name" value="Skp1_POZ"/>
    <property type="match status" value="1"/>
</dbReference>
<dbReference type="PIRSF" id="PIRSF028729">
    <property type="entry name" value="E3_ubiquit_lig_SCF_Skp"/>
    <property type="match status" value="1"/>
</dbReference>
<dbReference type="SMART" id="SM00512">
    <property type="entry name" value="Skp1"/>
    <property type="match status" value="1"/>
</dbReference>
<dbReference type="SUPFAM" id="SSF54695">
    <property type="entry name" value="POZ domain"/>
    <property type="match status" value="1"/>
</dbReference>
<dbReference type="SUPFAM" id="SSF81382">
    <property type="entry name" value="Skp1 dimerisation domain-like"/>
    <property type="match status" value="1"/>
</dbReference>
<reference key="1">
    <citation type="journal article" date="2000" name="DNA Res.">
        <title>Structural analysis of Arabidopsis thaliana chromosome 3. I. Sequence features of the regions of 4,504,864 bp covered by sixty P1 and TAC clones.</title>
        <authorList>
            <person name="Sato S."/>
            <person name="Nakamura Y."/>
            <person name="Kaneko T."/>
            <person name="Katoh T."/>
            <person name="Asamizu E."/>
            <person name="Tabata S."/>
        </authorList>
    </citation>
    <scope>NUCLEOTIDE SEQUENCE [LARGE SCALE GENOMIC DNA]</scope>
    <source>
        <strain>cv. Columbia</strain>
    </source>
</reference>
<reference key="2">
    <citation type="journal article" date="2017" name="Plant J.">
        <title>Araport11: a complete reannotation of the Arabidopsis thaliana reference genome.</title>
        <authorList>
            <person name="Cheng C.Y."/>
            <person name="Krishnakumar V."/>
            <person name="Chan A.P."/>
            <person name="Thibaud-Nissen F."/>
            <person name="Schobel S."/>
            <person name="Town C.D."/>
        </authorList>
    </citation>
    <scope>GENOME REANNOTATION</scope>
    <source>
        <strain>cv. Columbia</strain>
    </source>
</reference>
<reference key="3">
    <citation type="submission" date="2005-05" db="EMBL/GenBank/DDBJ databases">
        <authorList>
            <person name="Underwood B.A."/>
            <person name="Xiao Y.-L."/>
            <person name="Moskal W.A. Jr."/>
            <person name="Monaghan E.L."/>
            <person name="Wang W."/>
            <person name="Redman J.C."/>
            <person name="Wu H.C."/>
            <person name="Utterback T."/>
            <person name="Town C.D."/>
        </authorList>
    </citation>
    <scope>NUCLEOTIDE SEQUENCE [LARGE SCALE MRNA]</scope>
    <source>
        <strain>cv. Columbia</strain>
    </source>
</reference>
<reference key="4">
    <citation type="journal article" date="2003" name="Plant Physiol.">
        <title>Members of the Arabidopsis-SKP1-like gene family exhibit a variety of expression patterns and may play diverse roles in Arabidopsis.</title>
        <authorList>
            <person name="Zhao D."/>
            <person name="Ni W."/>
            <person name="Feng B."/>
            <person name="Han T."/>
            <person name="Petrasek M.G."/>
            <person name="Ma H."/>
        </authorList>
    </citation>
    <scope>GENE FAMILY</scope>
    <scope>NOMENCLATURE</scope>
    <scope>TISSUE SPECIFICITY</scope>
</reference>
<comment type="function">
    <text evidence="1">Involved in ubiquitination and subsequent proteasomal degradation of target proteins. Together with CUL1, RBX1 and a F-box protein, it forms a SCF E3 ubiquitin ligase complex. The functional specificity of this complex depends on the type of F-box protein. In the SCF complex, it serves as an adapter that links the F-box protein to CUL1 (By similarity).</text>
</comment>
<comment type="pathway">
    <text>Protein modification; protein ubiquitination.</text>
</comment>
<comment type="subunit">
    <text evidence="1">Part of a SCF (SKP1-cullin-F-box) protein ligase complex.</text>
</comment>
<comment type="subcellular location">
    <subcellularLocation>
        <location evidence="1">Nucleus</location>
    </subcellularLocation>
</comment>
<comment type="tissue specificity">
    <text evidence="2">Restricted to siliques.</text>
</comment>
<comment type="similarity">
    <text evidence="3">Belongs to the SKP1 family.</text>
</comment>
<keyword id="KW-0539">Nucleus</keyword>
<keyword id="KW-1185">Reference proteome</keyword>
<keyword id="KW-0833">Ubl conjugation pathway</keyword>